<accession>Q92GY6</accession>
<proteinExistence type="inferred from homology"/>
<name>SECY_RICCN</name>
<gene>
    <name evidence="1" type="primary">secY</name>
    <name type="ordered locus">RC0986</name>
</gene>
<sequence>MGQNFSKKSGNDLVSRIVFTILILIVCRFGSFIPIPGIDSIALSSVAAQNQSGILGMFNMLSGGSLGRMSIFALAIMPYITASIIIQLMSVAYKPLENLKKEGEVGKRKVNQLSRYLTVLLASFQAYGVAISLESIVTNTGPVVILAGFFFRITTVITLVVGTMLLMWLGEQITQRGIGNGTSLIIFIGIISGVPSAIISMFELSRKGALSPLIAIAVCIGVVVLIAIIIFFERAQRKLLVQYPKRQVGNKIYGGEATHMPLKLNTSGVIPPIFASSILLFPATLANFSNSNSETMGMLTYYLGHGKPVYILLYVALIMFFSFFYTAIVFNSEETANNLRKYGAYIPGKRPGKNTSDYFDYILTRLTVIGGIYLSVICVIPELLMNKYVISLSLGGTSFLIVVNVVLDTMTQIQTYLFSSKYEGLMKKVKLKN</sequence>
<reference key="1">
    <citation type="journal article" date="2001" name="Science">
        <title>Mechanisms of evolution in Rickettsia conorii and R. prowazekii.</title>
        <authorList>
            <person name="Ogata H."/>
            <person name="Audic S."/>
            <person name="Renesto-Audiffren P."/>
            <person name="Fournier P.-E."/>
            <person name="Barbe V."/>
            <person name="Samson D."/>
            <person name="Roux V."/>
            <person name="Cossart P."/>
            <person name="Weissenbach J."/>
            <person name="Claverie J.-M."/>
            <person name="Raoult D."/>
        </authorList>
    </citation>
    <scope>NUCLEOTIDE SEQUENCE [LARGE SCALE GENOMIC DNA]</scope>
    <source>
        <strain>ATCC VR-613 / Malish 7</strain>
    </source>
</reference>
<dbReference type="EMBL" id="AE006914">
    <property type="protein sequence ID" value="AAL03524.1"/>
    <property type="molecule type" value="Genomic_DNA"/>
</dbReference>
<dbReference type="PIR" id="B97823">
    <property type="entry name" value="B97823"/>
</dbReference>
<dbReference type="RefSeq" id="WP_010977578.1">
    <property type="nucleotide sequence ID" value="NC_003103.1"/>
</dbReference>
<dbReference type="SMR" id="Q92GY6"/>
<dbReference type="GeneID" id="928129"/>
<dbReference type="KEGG" id="rco:RC0986"/>
<dbReference type="PATRIC" id="fig|272944.4.peg.1126"/>
<dbReference type="HOGENOM" id="CLU_030313_0_2_5"/>
<dbReference type="Proteomes" id="UP000000816">
    <property type="component" value="Chromosome"/>
</dbReference>
<dbReference type="GO" id="GO:0005886">
    <property type="term" value="C:plasma membrane"/>
    <property type="evidence" value="ECO:0007669"/>
    <property type="project" value="UniProtKB-SubCell"/>
</dbReference>
<dbReference type="GO" id="GO:0065002">
    <property type="term" value="P:intracellular protein transmembrane transport"/>
    <property type="evidence" value="ECO:0007669"/>
    <property type="project" value="UniProtKB-UniRule"/>
</dbReference>
<dbReference type="GO" id="GO:0006605">
    <property type="term" value="P:protein targeting"/>
    <property type="evidence" value="ECO:0007669"/>
    <property type="project" value="UniProtKB-UniRule"/>
</dbReference>
<dbReference type="GO" id="GO:0043952">
    <property type="term" value="P:protein transport by the Sec complex"/>
    <property type="evidence" value="ECO:0007669"/>
    <property type="project" value="UniProtKB-UniRule"/>
</dbReference>
<dbReference type="FunFam" id="1.10.3370.10:FF:000001">
    <property type="entry name" value="Preprotein translocase subunit SecY"/>
    <property type="match status" value="1"/>
</dbReference>
<dbReference type="Gene3D" id="1.10.3370.10">
    <property type="entry name" value="SecY subunit domain"/>
    <property type="match status" value="1"/>
</dbReference>
<dbReference type="HAMAP" id="MF_01465">
    <property type="entry name" value="SecY"/>
    <property type="match status" value="1"/>
</dbReference>
<dbReference type="InterPro" id="IPR026593">
    <property type="entry name" value="SecY"/>
</dbReference>
<dbReference type="InterPro" id="IPR002208">
    <property type="entry name" value="SecY/SEC61-alpha"/>
</dbReference>
<dbReference type="InterPro" id="IPR030659">
    <property type="entry name" value="SecY_CS"/>
</dbReference>
<dbReference type="InterPro" id="IPR023201">
    <property type="entry name" value="SecY_dom_sf"/>
</dbReference>
<dbReference type="NCBIfam" id="TIGR00967">
    <property type="entry name" value="3a0501s007"/>
    <property type="match status" value="1"/>
</dbReference>
<dbReference type="PANTHER" id="PTHR10906">
    <property type="entry name" value="SECY/SEC61-ALPHA FAMILY MEMBER"/>
    <property type="match status" value="1"/>
</dbReference>
<dbReference type="Pfam" id="PF00344">
    <property type="entry name" value="SecY"/>
    <property type="match status" value="1"/>
</dbReference>
<dbReference type="PIRSF" id="PIRSF004557">
    <property type="entry name" value="SecY"/>
    <property type="match status" value="1"/>
</dbReference>
<dbReference type="PRINTS" id="PR00303">
    <property type="entry name" value="SECYTRNLCASE"/>
</dbReference>
<dbReference type="SUPFAM" id="SSF103491">
    <property type="entry name" value="Preprotein translocase SecY subunit"/>
    <property type="match status" value="1"/>
</dbReference>
<dbReference type="PROSITE" id="PS00755">
    <property type="entry name" value="SECY_1"/>
    <property type="match status" value="1"/>
</dbReference>
<dbReference type="PROSITE" id="PS00756">
    <property type="entry name" value="SECY_2"/>
    <property type="match status" value="1"/>
</dbReference>
<protein>
    <recommendedName>
        <fullName evidence="1">Protein translocase subunit SecY</fullName>
    </recommendedName>
</protein>
<organism>
    <name type="scientific">Rickettsia conorii (strain ATCC VR-613 / Malish 7)</name>
    <dbReference type="NCBI Taxonomy" id="272944"/>
    <lineage>
        <taxon>Bacteria</taxon>
        <taxon>Pseudomonadati</taxon>
        <taxon>Pseudomonadota</taxon>
        <taxon>Alphaproteobacteria</taxon>
        <taxon>Rickettsiales</taxon>
        <taxon>Rickettsiaceae</taxon>
        <taxon>Rickettsieae</taxon>
        <taxon>Rickettsia</taxon>
        <taxon>spotted fever group</taxon>
    </lineage>
</organism>
<feature type="chain" id="PRO_0000277280" description="Protein translocase subunit SecY">
    <location>
        <begin position="1"/>
        <end position="433"/>
    </location>
</feature>
<feature type="transmembrane region" description="Helical" evidence="1">
    <location>
        <begin position="17"/>
        <end position="37"/>
    </location>
</feature>
<feature type="transmembrane region" description="Helical" evidence="1">
    <location>
        <begin position="71"/>
        <end position="91"/>
    </location>
</feature>
<feature type="transmembrane region" description="Helical" evidence="1">
    <location>
        <begin position="117"/>
        <end position="137"/>
    </location>
</feature>
<feature type="transmembrane region" description="Helical" evidence="1">
    <location>
        <begin position="141"/>
        <end position="161"/>
    </location>
</feature>
<feature type="transmembrane region" description="Helical" evidence="1">
    <location>
        <begin position="184"/>
        <end position="204"/>
    </location>
</feature>
<feature type="transmembrane region" description="Helical" evidence="1">
    <location>
        <begin position="212"/>
        <end position="232"/>
    </location>
</feature>
<feature type="transmembrane region" description="Helical" evidence="1">
    <location>
        <begin position="268"/>
        <end position="288"/>
    </location>
</feature>
<feature type="transmembrane region" description="Helical" evidence="1">
    <location>
        <begin position="310"/>
        <end position="330"/>
    </location>
</feature>
<feature type="transmembrane region" description="Helical" evidence="1">
    <location>
        <begin position="366"/>
        <end position="386"/>
    </location>
</feature>
<feature type="transmembrane region" description="Helical" evidence="1">
    <location>
        <begin position="388"/>
        <end position="408"/>
    </location>
</feature>
<keyword id="KW-0997">Cell inner membrane</keyword>
<keyword id="KW-1003">Cell membrane</keyword>
<keyword id="KW-0472">Membrane</keyword>
<keyword id="KW-0653">Protein transport</keyword>
<keyword id="KW-0811">Translocation</keyword>
<keyword id="KW-0812">Transmembrane</keyword>
<keyword id="KW-1133">Transmembrane helix</keyword>
<keyword id="KW-0813">Transport</keyword>
<evidence type="ECO:0000255" key="1">
    <source>
        <dbReference type="HAMAP-Rule" id="MF_01465"/>
    </source>
</evidence>
<comment type="function">
    <text evidence="1">The central subunit of the protein translocation channel SecYEG. Consists of two halves formed by TMs 1-5 and 6-10. These two domains form a lateral gate at the front which open onto the bilayer between TMs 2 and 7, and are clamped together by SecE at the back. The channel is closed by both a pore ring composed of hydrophobic SecY resides and a short helix (helix 2A) on the extracellular side of the membrane which forms a plug. The plug probably moves laterally to allow the channel to open. The ring and the pore may move independently.</text>
</comment>
<comment type="subunit">
    <text evidence="1">Component of the Sec protein translocase complex. Heterotrimer consisting of SecY, SecE and SecG subunits. The heterotrimers can form oligomers, although 1 heterotrimer is thought to be able to translocate proteins. Interacts with the ribosome. Interacts with SecDF, and other proteins may be involved. Interacts with SecA.</text>
</comment>
<comment type="subcellular location">
    <subcellularLocation>
        <location evidence="1">Cell inner membrane</location>
        <topology evidence="1">Multi-pass membrane protein</topology>
    </subcellularLocation>
</comment>
<comment type="similarity">
    <text evidence="1">Belongs to the SecY/SEC61-alpha family.</text>
</comment>